<gene>
    <name evidence="1" type="primary">rlmF</name>
    <name type="ordered locus">YE2849</name>
</gene>
<evidence type="ECO:0000255" key="1">
    <source>
        <dbReference type="HAMAP-Rule" id="MF_01848"/>
    </source>
</evidence>
<name>RLMF_YERE8</name>
<sequence length="335" mass="37371">MLSYAPENAYQRLSTMENKKVFPKEKSGLHPRNRHRSRYDFDALSVSCPELIPFLAPTAYGDISIDFASPLAVKMLNKALLKHFYGIEYWDIPADFLCPPIPGRADYVHHLADLLASCNDGVIPQGKNVAVLDIGVGANCIYPIIGQREYGWRFTGTDIDPQALSAAKMVVSMNPTLKNTLRLKQQKNPQAIFDGILAVNERYDATLCNPPFHGSAEEAAATTRRKLHKLGKSEVAAKPVQNFGGKNSELWCEGGEEGFVSRMVAESATKAQNCFWFTSLISKKTTLPAIYHALRYANAVEVRTIDMAQGQKVSRFVAWTFLTPEQQAAWKAERW</sequence>
<feature type="chain" id="PRO_0000349980" description="Ribosomal RNA large subunit methyltransferase F">
    <location>
        <begin position="1"/>
        <end position="335"/>
    </location>
</feature>
<dbReference type="EC" id="2.1.1.181" evidence="1"/>
<dbReference type="EMBL" id="AM286415">
    <property type="protein sequence ID" value="CAL12883.1"/>
    <property type="molecule type" value="Genomic_DNA"/>
</dbReference>
<dbReference type="RefSeq" id="YP_001007038.1">
    <property type="nucleotide sequence ID" value="NC_008800.1"/>
</dbReference>
<dbReference type="SMR" id="A1JU40"/>
<dbReference type="KEGG" id="yen:YE2849"/>
<dbReference type="PATRIC" id="fig|393305.7.peg.3027"/>
<dbReference type="eggNOG" id="COG3129">
    <property type="taxonomic scope" value="Bacteria"/>
</dbReference>
<dbReference type="HOGENOM" id="CLU_027534_3_0_6"/>
<dbReference type="OrthoDB" id="1115728at2"/>
<dbReference type="Proteomes" id="UP000000642">
    <property type="component" value="Chromosome"/>
</dbReference>
<dbReference type="GO" id="GO:0005737">
    <property type="term" value="C:cytoplasm"/>
    <property type="evidence" value="ECO:0007669"/>
    <property type="project" value="UniProtKB-SubCell"/>
</dbReference>
<dbReference type="GO" id="GO:0052907">
    <property type="term" value="F:23S rRNA (adenine(1618)-N(6))-methyltransferase activity"/>
    <property type="evidence" value="ECO:0007669"/>
    <property type="project" value="UniProtKB-EC"/>
</dbReference>
<dbReference type="GO" id="GO:0070475">
    <property type="term" value="P:rRNA base methylation"/>
    <property type="evidence" value="ECO:0007669"/>
    <property type="project" value="TreeGrafter"/>
</dbReference>
<dbReference type="CDD" id="cd02440">
    <property type="entry name" value="AdoMet_MTases"/>
    <property type="match status" value="1"/>
</dbReference>
<dbReference type="FunFam" id="3.40.50.150:FF:000045">
    <property type="entry name" value="Ribosomal RNA large subunit methyltransferase F"/>
    <property type="match status" value="1"/>
</dbReference>
<dbReference type="Gene3D" id="3.40.50.150">
    <property type="entry name" value="Vaccinia Virus protein VP39"/>
    <property type="match status" value="1"/>
</dbReference>
<dbReference type="HAMAP" id="MF_01848">
    <property type="entry name" value="23SrRNA_methyltr_F"/>
    <property type="match status" value="1"/>
</dbReference>
<dbReference type="InterPro" id="IPR010286">
    <property type="entry name" value="METTL16/RlmF"/>
</dbReference>
<dbReference type="InterPro" id="IPR016909">
    <property type="entry name" value="rRNA_lsu_MeTfrase_F"/>
</dbReference>
<dbReference type="InterPro" id="IPR029063">
    <property type="entry name" value="SAM-dependent_MTases_sf"/>
</dbReference>
<dbReference type="NCBIfam" id="NF008725">
    <property type="entry name" value="PRK11727.1"/>
    <property type="match status" value="1"/>
</dbReference>
<dbReference type="PANTHER" id="PTHR13393:SF0">
    <property type="entry name" value="RNA N6-ADENOSINE-METHYLTRANSFERASE METTL16"/>
    <property type="match status" value="1"/>
</dbReference>
<dbReference type="PANTHER" id="PTHR13393">
    <property type="entry name" value="SAM-DEPENDENT METHYLTRANSFERASE"/>
    <property type="match status" value="1"/>
</dbReference>
<dbReference type="Pfam" id="PF05971">
    <property type="entry name" value="Methyltransf_10"/>
    <property type="match status" value="1"/>
</dbReference>
<dbReference type="PIRSF" id="PIRSF029038">
    <property type="entry name" value="Mtase_YbiN_prd"/>
    <property type="match status" value="1"/>
</dbReference>
<dbReference type="SUPFAM" id="SSF53335">
    <property type="entry name" value="S-adenosyl-L-methionine-dependent methyltransferases"/>
    <property type="match status" value="1"/>
</dbReference>
<protein>
    <recommendedName>
        <fullName evidence="1">Ribosomal RNA large subunit methyltransferase F</fullName>
        <ecNumber evidence="1">2.1.1.181</ecNumber>
    </recommendedName>
    <alternativeName>
        <fullName evidence="1">23S rRNA mA1618 methyltransferase</fullName>
    </alternativeName>
    <alternativeName>
        <fullName evidence="1">rRNA adenine N-6-methyltransferase</fullName>
    </alternativeName>
</protein>
<accession>A1JU40</accession>
<keyword id="KW-0963">Cytoplasm</keyword>
<keyword id="KW-0489">Methyltransferase</keyword>
<keyword id="KW-0698">rRNA processing</keyword>
<keyword id="KW-0949">S-adenosyl-L-methionine</keyword>
<keyword id="KW-0808">Transferase</keyword>
<comment type="function">
    <text evidence="1">Specifically methylates the adenine in position 1618 of 23S rRNA.</text>
</comment>
<comment type="catalytic activity">
    <reaction evidence="1">
        <text>adenosine(1618) in 23S rRNA + S-adenosyl-L-methionine = N(6)-methyladenosine(1618) in 23S rRNA + S-adenosyl-L-homocysteine + H(+)</text>
        <dbReference type="Rhea" id="RHEA:16497"/>
        <dbReference type="Rhea" id="RHEA-COMP:10229"/>
        <dbReference type="Rhea" id="RHEA-COMP:10231"/>
        <dbReference type="ChEBI" id="CHEBI:15378"/>
        <dbReference type="ChEBI" id="CHEBI:57856"/>
        <dbReference type="ChEBI" id="CHEBI:59789"/>
        <dbReference type="ChEBI" id="CHEBI:74411"/>
        <dbReference type="ChEBI" id="CHEBI:74449"/>
        <dbReference type="EC" id="2.1.1.181"/>
    </reaction>
</comment>
<comment type="subcellular location">
    <subcellularLocation>
        <location evidence="1">Cytoplasm</location>
    </subcellularLocation>
</comment>
<comment type="similarity">
    <text evidence="1">Belongs to the methyltransferase superfamily. METTL16/RlmF family.</text>
</comment>
<reference key="1">
    <citation type="journal article" date="2006" name="PLoS Genet.">
        <title>The complete genome sequence and comparative genome analysis of the high pathogenicity Yersinia enterocolitica strain 8081.</title>
        <authorList>
            <person name="Thomson N.R."/>
            <person name="Howard S."/>
            <person name="Wren B.W."/>
            <person name="Holden M.T.G."/>
            <person name="Crossman L."/>
            <person name="Challis G.L."/>
            <person name="Churcher C."/>
            <person name="Mungall K."/>
            <person name="Brooks K."/>
            <person name="Chillingworth T."/>
            <person name="Feltwell T."/>
            <person name="Abdellah Z."/>
            <person name="Hauser H."/>
            <person name="Jagels K."/>
            <person name="Maddison M."/>
            <person name="Moule S."/>
            <person name="Sanders M."/>
            <person name="Whitehead S."/>
            <person name="Quail M.A."/>
            <person name="Dougan G."/>
            <person name="Parkhill J."/>
            <person name="Prentice M.B."/>
        </authorList>
    </citation>
    <scope>NUCLEOTIDE SEQUENCE [LARGE SCALE GENOMIC DNA]</scope>
    <source>
        <strain>NCTC 13174 / 8081</strain>
    </source>
</reference>
<proteinExistence type="inferred from homology"/>
<organism>
    <name type="scientific">Yersinia enterocolitica serotype O:8 / biotype 1B (strain NCTC 13174 / 8081)</name>
    <dbReference type="NCBI Taxonomy" id="393305"/>
    <lineage>
        <taxon>Bacteria</taxon>
        <taxon>Pseudomonadati</taxon>
        <taxon>Pseudomonadota</taxon>
        <taxon>Gammaproteobacteria</taxon>
        <taxon>Enterobacterales</taxon>
        <taxon>Yersiniaceae</taxon>
        <taxon>Yersinia</taxon>
    </lineage>
</organism>